<protein>
    <recommendedName>
        <fullName evidence="1">YcgL domain-containing protein Tcr_0238</fullName>
    </recommendedName>
</protein>
<feature type="chain" id="PRO_0000375392" description="YcgL domain-containing protein Tcr_0238">
    <location>
        <begin position="1"/>
        <end position="97"/>
    </location>
</feature>
<feature type="domain" description="YcgL" evidence="1">
    <location>
        <begin position="3"/>
        <end position="87"/>
    </location>
</feature>
<feature type="region of interest" description="Disordered" evidence="2">
    <location>
        <begin position="78"/>
        <end position="97"/>
    </location>
</feature>
<proteinExistence type="inferred from homology"/>
<name>Y238_HYDCU</name>
<organism>
    <name type="scientific">Hydrogenovibrio crunogenus (strain DSM 25203 / XCL-2)</name>
    <name type="common">Thiomicrospira crunogena</name>
    <dbReference type="NCBI Taxonomy" id="317025"/>
    <lineage>
        <taxon>Bacteria</taxon>
        <taxon>Pseudomonadati</taxon>
        <taxon>Pseudomonadota</taxon>
        <taxon>Gammaproteobacteria</taxon>
        <taxon>Thiotrichales</taxon>
        <taxon>Piscirickettsiaceae</taxon>
        <taxon>Hydrogenovibrio</taxon>
    </lineage>
</organism>
<gene>
    <name type="ordered locus">Tcr_0238</name>
</gene>
<reference key="1">
    <citation type="journal article" date="2006" name="PLoS Biol.">
        <title>The genome of deep-sea vent chemolithoautotroph Thiomicrospira crunogena XCL-2.</title>
        <authorList>
            <person name="Scott K.M."/>
            <person name="Sievert S.M."/>
            <person name="Abril F.N."/>
            <person name="Ball L.A."/>
            <person name="Barrett C.J."/>
            <person name="Blake R.A."/>
            <person name="Boller A.J."/>
            <person name="Chain P.S.G."/>
            <person name="Clark J.A."/>
            <person name="Davis C.R."/>
            <person name="Detter C."/>
            <person name="Do K.F."/>
            <person name="Dobrinski K.P."/>
            <person name="Faza B.I."/>
            <person name="Fitzpatrick K.A."/>
            <person name="Freyermuth S.K."/>
            <person name="Harmer T.L."/>
            <person name="Hauser L.J."/>
            <person name="Huegler M."/>
            <person name="Kerfeld C.A."/>
            <person name="Klotz M.G."/>
            <person name="Kong W.W."/>
            <person name="Land M."/>
            <person name="Lapidus A."/>
            <person name="Larimer F.W."/>
            <person name="Longo D.L."/>
            <person name="Lucas S."/>
            <person name="Malfatti S.A."/>
            <person name="Massey S.E."/>
            <person name="Martin D.D."/>
            <person name="McCuddin Z."/>
            <person name="Meyer F."/>
            <person name="Moore J.L."/>
            <person name="Ocampo L.H. Jr."/>
            <person name="Paul J.H."/>
            <person name="Paulsen I.T."/>
            <person name="Reep D.K."/>
            <person name="Ren Q."/>
            <person name="Ross R.L."/>
            <person name="Sato P.Y."/>
            <person name="Thomas P."/>
            <person name="Tinkham L.E."/>
            <person name="Zeruth G.T."/>
        </authorList>
    </citation>
    <scope>NUCLEOTIDE SEQUENCE [LARGE SCALE GENOMIC DNA]</scope>
    <source>
        <strain>DSM 25203 / XCL-2</strain>
    </source>
</reference>
<sequence length="97" mass="11142">MALLVSAYKSAKKDELYLFVPKEDGLEKLSDELLVMFGEPQHVIDFDLTEKRKLARVDAEEVKKALETKGYFMQMPPSEIEKMGDMPPPPEHLDNIF</sequence>
<evidence type="ECO:0000255" key="1">
    <source>
        <dbReference type="HAMAP-Rule" id="MF_01866"/>
    </source>
</evidence>
<evidence type="ECO:0000256" key="2">
    <source>
        <dbReference type="SAM" id="MobiDB-lite"/>
    </source>
</evidence>
<dbReference type="EMBL" id="CP000109">
    <property type="protein sequence ID" value="ABB40834.1"/>
    <property type="molecule type" value="Genomic_DNA"/>
</dbReference>
<dbReference type="SMR" id="Q31J39"/>
<dbReference type="STRING" id="317025.Tcr_0238"/>
<dbReference type="KEGG" id="tcx:Tcr_0238"/>
<dbReference type="eggNOG" id="COG3100">
    <property type="taxonomic scope" value="Bacteria"/>
</dbReference>
<dbReference type="HOGENOM" id="CLU_155118_2_0_6"/>
<dbReference type="OrthoDB" id="7062382at2"/>
<dbReference type="Gene3D" id="3.10.510.20">
    <property type="entry name" value="YcgL domain"/>
    <property type="match status" value="1"/>
</dbReference>
<dbReference type="HAMAP" id="MF_01866">
    <property type="entry name" value="UPF0745"/>
    <property type="match status" value="1"/>
</dbReference>
<dbReference type="InterPro" id="IPR038068">
    <property type="entry name" value="YcgL-like_sf"/>
</dbReference>
<dbReference type="InterPro" id="IPR027354">
    <property type="entry name" value="YcgL_dom"/>
</dbReference>
<dbReference type="PANTHER" id="PTHR38109">
    <property type="entry name" value="PROTEIN YCGL"/>
    <property type="match status" value="1"/>
</dbReference>
<dbReference type="PANTHER" id="PTHR38109:SF1">
    <property type="entry name" value="PROTEIN YCGL"/>
    <property type="match status" value="1"/>
</dbReference>
<dbReference type="Pfam" id="PF05166">
    <property type="entry name" value="YcgL"/>
    <property type="match status" value="1"/>
</dbReference>
<dbReference type="SUPFAM" id="SSF160191">
    <property type="entry name" value="YcgL-like"/>
    <property type="match status" value="1"/>
</dbReference>
<dbReference type="PROSITE" id="PS51648">
    <property type="entry name" value="YCGL"/>
    <property type="match status" value="1"/>
</dbReference>
<accession>Q31J39</accession>